<name>NSP_CLVN</name>
<proteinExistence type="inferred from homology"/>
<organismHost>
    <name type="scientific">Hewittia sublobata</name>
    <dbReference type="NCBI Taxonomy" id="197394"/>
</organismHost>
<organismHost>
    <name type="scientific">Jatropha multifida</name>
    <name type="common">Coralbush</name>
    <dbReference type="NCBI Taxonomy" id="3996"/>
</organismHost>
<organismHost>
    <name type="scientific">Laportea</name>
    <dbReference type="NCBI Taxonomy" id="194268"/>
</organismHost>
<organismHost>
    <name type="scientific">Manihot esculenta</name>
    <name type="common">Cassava</name>
    <name type="synonym">Jatropha manihot</name>
    <dbReference type="NCBI Taxonomy" id="3983"/>
</organismHost>
<accession>P14970</accession>
<dbReference type="EMBL" id="X17096">
    <property type="protein sequence ID" value="CAA34954.1"/>
    <property type="molecule type" value="Genomic_DNA"/>
</dbReference>
<dbReference type="PIR" id="S07595">
    <property type="entry name" value="S07595"/>
</dbReference>
<dbReference type="SMR" id="P14970"/>
<dbReference type="Proteomes" id="UP000008453">
    <property type="component" value="Genome"/>
</dbReference>
<dbReference type="GO" id="GO:0043657">
    <property type="term" value="C:host cell"/>
    <property type="evidence" value="ECO:0007669"/>
    <property type="project" value="InterPro"/>
</dbReference>
<dbReference type="GO" id="GO:0030430">
    <property type="term" value="C:host cell cytoplasm"/>
    <property type="evidence" value="ECO:0007669"/>
    <property type="project" value="UniProtKB-SubCell"/>
</dbReference>
<dbReference type="GO" id="GO:0042025">
    <property type="term" value="C:host cell nucleus"/>
    <property type="evidence" value="ECO:0007669"/>
    <property type="project" value="UniProtKB-SubCell"/>
</dbReference>
<dbReference type="GO" id="GO:0020002">
    <property type="term" value="C:host cell plasma membrane"/>
    <property type="evidence" value="ECO:0007669"/>
    <property type="project" value="UniProtKB-SubCell"/>
</dbReference>
<dbReference type="GO" id="GO:0016020">
    <property type="term" value="C:membrane"/>
    <property type="evidence" value="ECO:0007669"/>
    <property type="project" value="UniProtKB-KW"/>
</dbReference>
<dbReference type="GO" id="GO:0019028">
    <property type="term" value="C:viral capsid"/>
    <property type="evidence" value="ECO:0007669"/>
    <property type="project" value="InterPro"/>
</dbReference>
<dbReference type="GO" id="GO:0003697">
    <property type="term" value="F:single-stranded DNA binding"/>
    <property type="evidence" value="ECO:0007669"/>
    <property type="project" value="InterPro"/>
</dbReference>
<dbReference type="GO" id="GO:0005198">
    <property type="term" value="F:structural molecule activity"/>
    <property type="evidence" value="ECO:0007669"/>
    <property type="project" value="InterPro"/>
</dbReference>
<dbReference type="GO" id="GO:0051027">
    <property type="term" value="P:DNA transport"/>
    <property type="evidence" value="ECO:0007669"/>
    <property type="project" value="InterPro"/>
</dbReference>
<dbReference type="GO" id="GO:0046740">
    <property type="term" value="P:transport of virus in host, cell to cell"/>
    <property type="evidence" value="ECO:0007669"/>
    <property type="project" value="UniProtKB-KW"/>
</dbReference>
<dbReference type="Gene3D" id="2.60.120.20">
    <property type="match status" value="1"/>
</dbReference>
<dbReference type="InterPro" id="IPR001530">
    <property type="entry name" value="Gemini_BR1"/>
</dbReference>
<dbReference type="InterPro" id="IPR000263">
    <property type="entry name" value="GV_A/BR1_coat"/>
</dbReference>
<dbReference type="InterPro" id="IPR029053">
    <property type="entry name" value="Viral_coat"/>
</dbReference>
<dbReference type="Pfam" id="PF00844">
    <property type="entry name" value="Gemini_coat"/>
    <property type="match status" value="1"/>
</dbReference>
<dbReference type="PRINTS" id="PR00225">
    <property type="entry name" value="GEMCOATBR1"/>
</dbReference>
<reference key="1">
    <citation type="journal article" date="1990" name="Nucleic Acids Res.">
        <title>Nucleotide sequence of the infectious cloned DNA components of African cassava mosaic virus (Nigerian strain).</title>
        <authorList>
            <person name="Morris B."/>
            <person name="Coates L."/>
            <person name="Lowe S."/>
            <person name="Richardson K."/>
            <person name="Eddy P."/>
        </authorList>
    </citation>
    <scope>NUCLEOTIDE SEQUENCE [GENOMIC DNA]</scope>
</reference>
<comment type="function">
    <text evidence="1">Binds to the genomic viral ssDNA, shuttles it into and out of the cell nucleus. Begomoviruses use 2 proteins to transport their DNA from cell to cell. The nuclear shuttle protein (NSP) shuttles it between nucleus and cytoplasm and the movement protein (MP) probably transports the DNA-NSP complex to the cell periphery and facilitates movement across the cell wall (By similarity).</text>
</comment>
<comment type="subunit">
    <text evidence="1">Binds to single-stranded and double-stranded viral DNA. Interacts with the host nuclear shuttle interacting (NSI) protein. This interaction may allow NSP to recruit NSI monomers to the viral genome and thus regulate nuclear export of viral genome by NSP (By similarity).</text>
</comment>
<comment type="subcellular location">
    <subcellularLocation>
        <location evidence="1">Host nucleus</location>
    </subcellularLocation>
    <subcellularLocation>
        <location evidence="1">Host cytoplasm</location>
    </subcellularLocation>
    <subcellularLocation>
        <location evidence="1">Host cell membrane</location>
        <topology evidence="1">Peripheral membrane protein</topology>
        <orientation evidence="1">Cytoplasmic side</orientation>
    </subcellularLocation>
    <text evidence="1">Translocated to the plasma membrane by the movement protein BC1.</text>
</comment>
<comment type="similarity">
    <text evidence="2">Belongs to the begomovirus nuclear shuttle protein family.</text>
</comment>
<protein>
    <recommendedName>
        <fullName>Nuclear shuttle protein</fullName>
        <shortName>NSP</shortName>
    </recommendedName>
    <alternativeName>
        <fullName>29.4 kDa protein</fullName>
    </alternativeName>
    <alternativeName>
        <fullName>Protein BR1</fullName>
    </alternativeName>
    <alternativeName>
        <fullName>Protein BV1</fullName>
    </alternativeName>
</protein>
<feature type="chain" id="PRO_0000222263" description="Nuclear shuttle protein">
    <location>
        <begin position="1"/>
        <end position="256"/>
    </location>
</feature>
<feature type="region of interest" description="Interaction with Arabidopsis thaliana NSI protein" evidence="1">
    <location>
        <begin position="150"/>
        <end position="187"/>
    </location>
</feature>
<feature type="short sequence motif" description="Bipartite nuclear localization signal" evidence="1">
    <location>
        <begin position="18"/>
        <end position="39"/>
    </location>
</feature>
<feature type="short sequence motif" description="Nuclear localization signal" evidence="1">
    <location>
        <begin position="81"/>
        <end position="96"/>
    </location>
</feature>
<keyword id="KW-0238">DNA-binding</keyword>
<keyword id="KW-1032">Host cell membrane</keyword>
<keyword id="KW-1035">Host cytoplasm</keyword>
<keyword id="KW-1043">Host membrane</keyword>
<keyword id="KW-1048">Host nucleus</keyword>
<keyword id="KW-0945">Host-virus interaction</keyword>
<keyword id="KW-0472">Membrane</keyword>
<keyword id="KW-1185">Reference proteome</keyword>
<keyword id="KW-0813">Transport</keyword>
<keyword id="KW-0916">Viral movement protein</keyword>
<organism>
    <name type="scientific">African cassava mosaic virus (isolate Nigerian)</name>
    <name type="common">ACMV</name>
    <name type="synonym">Cassava latent virus (isolate Nigerian)</name>
    <dbReference type="NCBI Taxonomy" id="222073"/>
    <lineage>
        <taxon>Viruses</taxon>
        <taxon>Monodnaviria</taxon>
        <taxon>Shotokuvirae</taxon>
        <taxon>Cressdnaviricota</taxon>
        <taxon>Repensiviricetes</taxon>
        <taxon>Geplafuvirales</taxon>
        <taxon>Geminiviridae</taxon>
        <taxon>Begomovirus</taxon>
        <taxon>Begomovirus manihotis</taxon>
    </lineage>
</organism>
<gene>
    <name type="ORF">BR1</name>
    <name type="ORF">BV1</name>
</gene>
<evidence type="ECO:0000250" key="1"/>
<evidence type="ECO:0000305" key="2"/>
<sequence>MYSIRKQPRNFQRKFNSNTTNRFPIRRKYVGGHTRPSVRRRLTYEPVERPLVHNVLCEKQHGDVFNLQQNTSYTSFVTYPSRGPSGDGRSRDYIKLQSMSVSGVIHAKANCNDDPMEVSHDVNGVFVFSLIMDTKPYLPAGVQALPTFEELFGAYSACYVNLRLLNNQQHRYRVLHSVKRFVSSAGDTKVSQFRFNKRLSTRRYNIWASFHDGDLVNAGGNYRNISKNAILVSYAFVSEHSMSCKPFVQIETSYVG</sequence>